<sequence>MLFKQLILVATALTTLAVATPAVMRRTEPASSCSTGPVNCCNSSGTAKDGNIAKELALLGIVVPDINALIGVSCSPITVIGAGGASCSSQTLCCEDNKYNGIVALGCIPVDISL</sequence>
<proteinExistence type="inferred from homology"/>
<accession>A0A067PCX8</accession>
<organism>
    <name type="scientific">Pleurotus ostreatus (strain PC15)</name>
    <name type="common">Oyster mushroom</name>
    <dbReference type="NCBI Taxonomy" id="1137138"/>
    <lineage>
        <taxon>Eukaryota</taxon>
        <taxon>Fungi</taxon>
        <taxon>Dikarya</taxon>
        <taxon>Basidiomycota</taxon>
        <taxon>Agaricomycotina</taxon>
        <taxon>Agaricomycetes</taxon>
        <taxon>Agaricomycetidae</taxon>
        <taxon>Agaricales</taxon>
        <taxon>Pleurotineae</taxon>
        <taxon>Pleurotaceae</taxon>
        <taxon>Pleurotus</taxon>
    </lineage>
</organism>
<comment type="function">
    <text evidence="5">Aerial growth, conidiation, and dispersal of filamentous fungi in the environment rely upon a capability of their secreting small amphipathic proteins called hydrophobins (HPBs) with low sequence identity. Class I can self-assemble into an outermost layer of rodlet bundles on aerial cell surfaces, conferring cellular hydrophobicity that supports fungal growth, development and dispersal; whereas Class II form highly ordered films at water-air interfaces through intermolecular interactions but contribute nothing to the rodlet structure.</text>
</comment>
<comment type="subunit">
    <text evidence="1">Self-assembles to form functional amyloid fibrils called rodlets. Self-assembly into fibrillar rodlets occurs spontaneously at hydrophobic:hydrophilic interfaces and the rodlets further associate laterally to form amphipathic monolayers.</text>
</comment>
<comment type="subcellular location">
    <subcellularLocation>
        <location evidence="6">Secreted</location>
    </subcellularLocation>
    <subcellularLocation>
        <location evidence="6">Secreted</location>
        <location evidence="6">Cell wall</location>
    </subcellularLocation>
</comment>
<comment type="similarity">
    <text evidence="5">Belongs to the fungal hydrophobin family.</text>
</comment>
<protein>
    <recommendedName>
        <fullName evidence="4">Class I hydrophobin 6</fullName>
    </recommendedName>
</protein>
<reference key="1">
    <citation type="journal article" date="2014" name="Proc. Natl. Acad. Sci. U.S.A.">
        <title>Extensive sampling of basidiomycete genomes demonstrates inadequacy of the white-rot/brown-rot paradigm for wood decay fungi.</title>
        <authorList>
            <person name="Riley R."/>
            <person name="Salamov A.A."/>
            <person name="Brown D.W."/>
            <person name="Nagy L.G."/>
            <person name="Floudas D."/>
            <person name="Held B.W."/>
            <person name="Levasseur A."/>
            <person name="Lombard V."/>
            <person name="Morin E."/>
            <person name="Otillar R."/>
            <person name="Lindquist E.A."/>
            <person name="Sun H."/>
            <person name="LaButti K.M."/>
            <person name="Schmutz J."/>
            <person name="Jabbour D."/>
            <person name="Luo H."/>
            <person name="Baker S.E."/>
            <person name="Pisabarro A.G."/>
            <person name="Walton J.D."/>
            <person name="Blanchette R.A."/>
            <person name="Henrissat B."/>
            <person name="Martin F."/>
            <person name="Cullen D."/>
            <person name="Hibbett D.S."/>
            <person name="Grigoriev I.V."/>
        </authorList>
    </citation>
    <scope>NUCLEOTIDE SEQUENCE [LARGE SCALE GENOMIC DNA]</scope>
    <source>
        <strain>PC15</strain>
    </source>
</reference>
<reference key="2">
    <citation type="journal article" date="2021" name="Microbiol. Res.">
        <title>Identification of hydrophobin genes and their physiological functions related to growth and development in Pleurotus ostreatus.</title>
        <authorList>
            <person name="Xu D."/>
            <person name="Wang Y."/>
            <person name="Keerio A.A."/>
            <person name="Ma A."/>
        </authorList>
    </citation>
    <scope>IDENTIFICATION</scope>
</reference>
<evidence type="ECO:0000250" key="1">
    <source>
        <dbReference type="UniProtKB" id="Q04571"/>
    </source>
</evidence>
<evidence type="ECO:0000255" key="2"/>
<evidence type="ECO:0000255" key="3">
    <source>
        <dbReference type="PROSITE-ProRule" id="PRU00498"/>
    </source>
</evidence>
<evidence type="ECO:0000303" key="4">
    <source>
    </source>
</evidence>
<evidence type="ECO:0000305" key="5"/>
<evidence type="ECO:0000305" key="6">
    <source>
    </source>
</evidence>
<name>HYD6_PLEO1</name>
<dbReference type="EMBL" id="KL198004">
    <property type="protein sequence ID" value="KDQ34252.1"/>
    <property type="molecule type" value="Genomic_DNA"/>
</dbReference>
<dbReference type="STRING" id="1137138.A0A067PCX8"/>
<dbReference type="VEuPathDB" id="FungiDB:PLEOSDRAFT_19935"/>
<dbReference type="HOGENOM" id="CLU_105134_2_0_1"/>
<dbReference type="InParanoid" id="A0A067PCX8"/>
<dbReference type="OrthoDB" id="138913at5338"/>
<dbReference type="Proteomes" id="UP000027073">
    <property type="component" value="Unassembled WGS sequence"/>
</dbReference>
<dbReference type="GO" id="GO:0005576">
    <property type="term" value="C:extracellular region"/>
    <property type="evidence" value="ECO:0007669"/>
    <property type="project" value="UniProtKB-KW"/>
</dbReference>
<dbReference type="GO" id="GO:0009277">
    <property type="term" value="C:fungal-type cell wall"/>
    <property type="evidence" value="ECO:0007669"/>
    <property type="project" value="InterPro"/>
</dbReference>
<dbReference type="GO" id="GO:0005199">
    <property type="term" value="F:structural constituent of cell wall"/>
    <property type="evidence" value="ECO:0007669"/>
    <property type="project" value="InterPro"/>
</dbReference>
<dbReference type="CDD" id="cd23507">
    <property type="entry name" value="hydrophobin_I"/>
    <property type="match status" value="1"/>
</dbReference>
<dbReference type="InterPro" id="IPR001338">
    <property type="entry name" value="Hydrophobin"/>
</dbReference>
<dbReference type="InterPro" id="IPR019778">
    <property type="entry name" value="Hydrophobin_CS"/>
</dbReference>
<dbReference type="Pfam" id="PF01185">
    <property type="entry name" value="Hydrophobin"/>
    <property type="match status" value="1"/>
</dbReference>
<dbReference type="SMART" id="SM00075">
    <property type="entry name" value="HYDRO"/>
    <property type="match status" value="1"/>
</dbReference>
<dbReference type="PROSITE" id="PS00956">
    <property type="entry name" value="HYDROPHOBIN"/>
    <property type="match status" value="1"/>
</dbReference>
<keyword id="KW-0134">Cell wall</keyword>
<keyword id="KW-1015">Disulfide bond</keyword>
<keyword id="KW-0325">Glycoprotein</keyword>
<keyword id="KW-1185">Reference proteome</keyword>
<keyword id="KW-0964">Secreted</keyword>
<keyword id="KW-0732">Signal</keyword>
<feature type="signal peptide" evidence="2">
    <location>
        <begin position="1"/>
        <end position="19"/>
    </location>
</feature>
<feature type="chain" id="PRO_5013984339" description="Class I hydrophobin 6">
    <location>
        <begin position="20"/>
        <end position="114"/>
    </location>
</feature>
<feature type="glycosylation site" description="N-linked (GlcNAc...) asparagine" evidence="3">
    <location>
        <position position="42"/>
    </location>
</feature>
<feature type="disulfide bond" evidence="1">
    <location>
        <begin position="33"/>
        <end position="93"/>
    </location>
</feature>
<feature type="disulfide bond" evidence="1">
    <location>
        <begin position="40"/>
        <end position="87"/>
    </location>
</feature>
<feature type="disulfide bond" evidence="1">
    <location>
        <begin position="41"/>
        <end position="74"/>
    </location>
</feature>
<feature type="disulfide bond" evidence="1">
    <location>
        <begin position="94"/>
        <end position="107"/>
    </location>
</feature>
<gene>
    <name evidence="4" type="primary">Hydph6</name>
    <name type="ORF">PLEOSDRAFT_19935</name>
</gene>